<accession>P0CB27</accession>
<accession>O04096</accession>
<feature type="chain" id="PRO_0000283282" description="F-box protein At1g10895">
    <location>
        <begin position="1"/>
        <end position="359"/>
    </location>
</feature>
<feature type="domain" description="F-box">
    <location>
        <begin position="2"/>
        <end position="48"/>
    </location>
</feature>
<name>FB3_ARATH</name>
<evidence type="ECO:0000305" key="1"/>
<organism>
    <name type="scientific">Arabidopsis thaliana</name>
    <name type="common">Mouse-ear cress</name>
    <dbReference type="NCBI Taxonomy" id="3702"/>
    <lineage>
        <taxon>Eukaryota</taxon>
        <taxon>Viridiplantae</taxon>
        <taxon>Streptophyta</taxon>
        <taxon>Embryophyta</taxon>
        <taxon>Tracheophyta</taxon>
        <taxon>Spermatophyta</taxon>
        <taxon>Magnoliopsida</taxon>
        <taxon>eudicotyledons</taxon>
        <taxon>Gunneridae</taxon>
        <taxon>Pentapetalae</taxon>
        <taxon>rosids</taxon>
        <taxon>malvids</taxon>
        <taxon>Brassicales</taxon>
        <taxon>Brassicaceae</taxon>
        <taxon>Camelineae</taxon>
        <taxon>Arabidopsis</taxon>
    </lineage>
</organism>
<gene>
    <name type="ordered locus">At1g10895</name>
    <name type="ORF">T19D16.19</name>
</gene>
<dbReference type="EMBL" id="U95973">
    <property type="protein sequence ID" value="AAB65488.1"/>
    <property type="status" value="ALT_SEQ"/>
    <property type="molecule type" value="Genomic_DNA"/>
</dbReference>
<dbReference type="EMBL" id="CP002684">
    <property type="status" value="NOT_ANNOTATED_CDS"/>
    <property type="molecule type" value="Genomic_DNA"/>
</dbReference>
<dbReference type="PIR" id="F86242">
    <property type="entry name" value="F86242"/>
</dbReference>
<dbReference type="Araport" id="AT1G10895"/>
<dbReference type="TAIR" id="AT1G10895"/>
<dbReference type="InParanoid" id="P0CB27"/>
<dbReference type="PRO" id="PR:P0CB27"/>
<dbReference type="Proteomes" id="UP000006548">
    <property type="component" value="Chromosome 1"/>
</dbReference>
<dbReference type="ExpressionAtlas" id="P0CB27">
    <property type="expression patterns" value="baseline and differential"/>
</dbReference>
<dbReference type="InterPro" id="IPR050233">
    <property type="entry name" value="A_thaliana_F-box"/>
</dbReference>
<dbReference type="InterPro" id="IPR006527">
    <property type="entry name" value="F-box-assoc_dom_typ1"/>
</dbReference>
<dbReference type="InterPro" id="IPR017451">
    <property type="entry name" value="F-box-assoc_interact_dom"/>
</dbReference>
<dbReference type="InterPro" id="IPR036047">
    <property type="entry name" value="F-box-like_dom_sf"/>
</dbReference>
<dbReference type="NCBIfam" id="TIGR01640">
    <property type="entry name" value="F_box_assoc_1"/>
    <property type="match status" value="2"/>
</dbReference>
<dbReference type="PANTHER" id="PTHR47993:SF360">
    <property type="entry name" value="F-BOX ASSOCIATED DOMAIN-CONTAINING PROTEIN"/>
    <property type="match status" value="1"/>
</dbReference>
<dbReference type="PANTHER" id="PTHR47993">
    <property type="entry name" value="OS09G0372900 PROTEIN-RELATED"/>
    <property type="match status" value="1"/>
</dbReference>
<dbReference type="Pfam" id="PF07734">
    <property type="entry name" value="FBA_1"/>
    <property type="match status" value="1"/>
</dbReference>
<dbReference type="SUPFAM" id="SSF81383">
    <property type="entry name" value="F-box domain"/>
    <property type="match status" value="1"/>
</dbReference>
<comment type="sequence caution" evidence="1">
    <conflict type="erroneous gene model prediction">
        <sequence resource="EMBL-CDS" id="AAB65488"/>
    </conflict>
    <text>The predicted gene has been split into 2 genes: At1g10890 and At1g10895.</text>
</comment>
<sequence length="359" mass="41304">MTTMSDLDEIMVAEILCRTPMTCLKTVRSVCKKWNALSKKWFFFGKAKQFLGFMMMDSRVCSLRFDLRKDLVVEPPSIKQVSILDQIEVSKIFHSDGLLLCIIKNDTTRLLVWNPYLEQTRWIQPRHNFHILDCYAIGHDKNRKHKILRFVDDFLPVENVVFGGNTYFFAKERYIFEGKGPEEIDITETEDFLLCFDFTAERFGPRLPLPFHSYYAETVTLSCVKEDQLSVLCQRQPSEPSEILEIWVSTNIQPNAVSWSIFLKVDMRPLTGFQFNDMAGSFFIDQENKVAVVFDLDPSQICRYQTAYIIGQEYGGYFNSVNIGEVPNLWIPGSVGYADTTSCIPPVCSSYVPSLVQIG</sequence>
<reference key="1">
    <citation type="journal article" date="2000" name="Nature">
        <title>Sequence and analysis of chromosome 1 of the plant Arabidopsis thaliana.</title>
        <authorList>
            <person name="Theologis A."/>
            <person name="Ecker J.R."/>
            <person name="Palm C.J."/>
            <person name="Federspiel N.A."/>
            <person name="Kaul S."/>
            <person name="White O."/>
            <person name="Alonso J."/>
            <person name="Altafi H."/>
            <person name="Araujo R."/>
            <person name="Bowman C.L."/>
            <person name="Brooks S.Y."/>
            <person name="Buehler E."/>
            <person name="Chan A."/>
            <person name="Chao Q."/>
            <person name="Chen H."/>
            <person name="Cheuk R.F."/>
            <person name="Chin C.W."/>
            <person name="Chung M.K."/>
            <person name="Conn L."/>
            <person name="Conway A.B."/>
            <person name="Conway A.R."/>
            <person name="Creasy T.H."/>
            <person name="Dewar K."/>
            <person name="Dunn P."/>
            <person name="Etgu P."/>
            <person name="Feldblyum T.V."/>
            <person name="Feng J.-D."/>
            <person name="Fong B."/>
            <person name="Fujii C.Y."/>
            <person name="Gill J.E."/>
            <person name="Goldsmith A.D."/>
            <person name="Haas B."/>
            <person name="Hansen N.F."/>
            <person name="Hughes B."/>
            <person name="Huizar L."/>
            <person name="Hunter J.L."/>
            <person name="Jenkins J."/>
            <person name="Johnson-Hopson C."/>
            <person name="Khan S."/>
            <person name="Khaykin E."/>
            <person name="Kim C.J."/>
            <person name="Koo H.L."/>
            <person name="Kremenetskaia I."/>
            <person name="Kurtz D.B."/>
            <person name="Kwan A."/>
            <person name="Lam B."/>
            <person name="Langin-Hooper S."/>
            <person name="Lee A."/>
            <person name="Lee J.M."/>
            <person name="Lenz C.A."/>
            <person name="Li J.H."/>
            <person name="Li Y.-P."/>
            <person name="Lin X."/>
            <person name="Liu S.X."/>
            <person name="Liu Z.A."/>
            <person name="Luros J.S."/>
            <person name="Maiti R."/>
            <person name="Marziali A."/>
            <person name="Militscher J."/>
            <person name="Miranda M."/>
            <person name="Nguyen M."/>
            <person name="Nierman W.C."/>
            <person name="Osborne B.I."/>
            <person name="Pai G."/>
            <person name="Peterson J."/>
            <person name="Pham P.K."/>
            <person name="Rizzo M."/>
            <person name="Rooney T."/>
            <person name="Rowley D."/>
            <person name="Sakano H."/>
            <person name="Salzberg S.L."/>
            <person name="Schwartz J.R."/>
            <person name="Shinn P."/>
            <person name="Southwick A.M."/>
            <person name="Sun H."/>
            <person name="Tallon L.J."/>
            <person name="Tambunga G."/>
            <person name="Toriumi M.J."/>
            <person name="Town C.D."/>
            <person name="Utterback T."/>
            <person name="Van Aken S."/>
            <person name="Vaysberg M."/>
            <person name="Vysotskaia V.S."/>
            <person name="Walker M."/>
            <person name="Wu D."/>
            <person name="Yu G."/>
            <person name="Fraser C.M."/>
            <person name="Venter J.C."/>
            <person name="Davis R.W."/>
        </authorList>
    </citation>
    <scope>NUCLEOTIDE SEQUENCE [LARGE SCALE GENOMIC DNA]</scope>
    <source>
        <strain>cv. Columbia</strain>
    </source>
</reference>
<reference key="2">
    <citation type="journal article" date="2017" name="Plant J.">
        <title>Araport11: a complete reannotation of the Arabidopsis thaliana reference genome.</title>
        <authorList>
            <person name="Cheng C.Y."/>
            <person name="Krishnakumar V."/>
            <person name="Chan A.P."/>
            <person name="Thibaud-Nissen F."/>
            <person name="Schobel S."/>
            <person name="Town C.D."/>
        </authorList>
    </citation>
    <scope>GENOME REANNOTATION</scope>
    <source>
        <strain>cv. Columbia</strain>
    </source>
</reference>
<keyword id="KW-1185">Reference proteome</keyword>
<protein>
    <recommendedName>
        <fullName>F-box protein At1g10895</fullName>
    </recommendedName>
</protein>
<proteinExistence type="predicted"/>